<keyword id="KW-0071">Autoinducer synthesis</keyword>
<keyword id="KW-0408">Iron</keyword>
<keyword id="KW-0456">Lyase</keyword>
<keyword id="KW-0479">Metal-binding</keyword>
<keyword id="KW-0673">Quorum sensing</keyword>
<gene>
    <name evidence="1" type="primary">luxS</name>
    <name type="ordered locus">PGN_1474</name>
</gene>
<protein>
    <recommendedName>
        <fullName evidence="1">S-ribosylhomocysteine lyase</fullName>
        <ecNumber evidence="1">4.4.1.21</ecNumber>
    </recommendedName>
    <alternativeName>
        <fullName evidence="1">AI-2 synthesis protein</fullName>
    </alternativeName>
    <alternativeName>
        <fullName evidence="1">Autoinducer-2 production protein LuxS</fullName>
    </alternativeName>
</protein>
<organism>
    <name type="scientific">Porphyromonas gingivalis (strain ATCC 33277 / DSM 20709 / CIP 103683 / JCM 12257 / NCTC 11834 / 2561)</name>
    <dbReference type="NCBI Taxonomy" id="431947"/>
    <lineage>
        <taxon>Bacteria</taxon>
        <taxon>Pseudomonadati</taxon>
        <taxon>Bacteroidota</taxon>
        <taxon>Bacteroidia</taxon>
        <taxon>Bacteroidales</taxon>
        <taxon>Porphyromonadaceae</taxon>
        <taxon>Porphyromonas</taxon>
    </lineage>
</organism>
<name>LUXS_PORG3</name>
<proteinExistence type="inferred from homology"/>
<accession>B2RKU8</accession>
<dbReference type="EC" id="4.4.1.21" evidence="1"/>
<dbReference type="EMBL" id="AP009380">
    <property type="protein sequence ID" value="BAG33993.1"/>
    <property type="molecule type" value="Genomic_DNA"/>
</dbReference>
<dbReference type="RefSeq" id="WP_012458299.1">
    <property type="nucleotide sequence ID" value="NC_010729.1"/>
</dbReference>
<dbReference type="SMR" id="B2RKU8"/>
<dbReference type="GeneID" id="29256655"/>
<dbReference type="KEGG" id="pgn:PGN_1474"/>
<dbReference type="eggNOG" id="COG1854">
    <property type="taxonomic scope" value="Bacteria"/>
</dbReference>
<dbReference type="HOGENOM" id="CLU_107531_1_0_10"/>
<dbReference type="OrthoDB" id="9788129at2"/>
<dbReference type="BioCyc" id="PGIN431947:G1G2V-1675-MONOMER"/>
<dbReference type="Proteomes" id="UP000008842">
    <property type="component" value="Chromosome"/>
</dbReference>
<dbReference type="GO" id="GO:0005506">
    <property type="term" value="F:iron ion binding"/>
    <property type="evidence" value="ECO:0007669"/>
    <property type="project" value="InterPro"/>
</dbReference>
<dbReference type="GO" id="GO:0043768">
    <property type="term" value="F:S-ribosylhomocysteine lyase activity"/>
    <property type="evidence" value="ECO:0007669"/>
    <property type="project" value="UniProtKB-UniRule"/>
</dbReference>
<dbReference type="GO" id="GO:0009372">
    <property type="term" value="P:quorum sensing"/>
    <property type="evidence" value="ECO:0007669"/>
    <property type="project" value="UniProtKB-UniRule"/>
</dbReference>
<dbReference type="Gene3D" id="3.30.1360.80">
    <property type="entry name" value="S-ribosylhomocysteinase (LuxS)"/>
    <property type="match status" value="1"/>
</dbReference>
<dbReference type="HAMAP" id="MF_00091">
    <property type="entry name" value="LuxS"/>
    <property type="match status" value="1"/>
</dbReference>
<dbReference type="InterPro" id="IPR037005">
    <property type="entry name" value="LuxS_sf"/>
</dbReference>
<dbReference type="InterPro" id="IPR011249">
    <property type="entry name" value="Metalloenz_LuxS/M16"/>
</dbReference>
<dbReference type="InterPro" id="IPR003815">
    <property type="entry name" value="S-ribosylhomocysteinase"/>
</dbReference>
<dbReference type="NCBIfam" id="NF002604">
    <property type="entry name" value="PRK02260.1-4"/>
    <property type="match status" value="1"/>
</dbReference>
<dbReference type="PANTHER" id="PTHR35799">
    <property type="entry name" value="S-RIBOSYLHOMOCYSTEINE LYASE"/>
    <property type="match status" value="1"/>
</dbReference>
<dbReference type="PANTHER" id="PTHR35799:SF1">
    <property type="entry name" value="S-RIBOSYLHOMOCYSTEINE LYASE"/>
    <property type="match status" value="1"/>
</dbReference>
<dbReference type="Pfam" id="PF02664">
    <property type="entry name" value="LuxS"/>
    <property type="match status" value="1"/>
</dbReference>
<dbReference type="PIRSF" id="PIRSF006160">
    <property type="entry name" value="AI2"/>
    <property type="match status" value="1"/>
</dbReference>
<dbReference type="PRINTS" id="PR01487">
    <property type="entry name" value="LUXSPROTEIN"/>
</dbReference>
<dbReference type="SUPFAM" id="SSF63411">
    <property type="entry name" value="LuxS/MPP-like metallohydrolase"/>
    <property type="match status" value="1"/>
</dbReference>
<feature type="chain" id="PRO_1000093318" description="S-ribosylhomocysteine lyase">
    <location>
        <begin position="1"/>
        <end position="159"/>
    </location>
</feature>
<feature type="binding site" evidence="1">
    <location>
        <position position="53"/>
    </location>
    <ligand>
        <name>Fe cation</name>
        <dbReference type="ChEBI" id="CHEBI:24875"/>
    </ligand>
</feature>
<feature type="binding site" evidence="1">
    <location>
        <position position="57"/>
    </location>
    <ligand>
        <name>Fe cation</name>
        <dbReference type="ChEBI" id="CHEBI:24875"/>
    </ligand>
</feature>
<feature type="binding site" evidence="1">
    <location>
        <position position="124"/>
    </location>
    <ligand>
        <name>Fe cation</name>
        <dbReference type="ChEBI" id="CHEBI:24875"/>
    </ligand>
</feature>
<sequence>MEKIPSFQLDHIRLKRGIYVSRKDYIGGEVVTTFDIRMKEPNREPVLGAPELHTIEHLAATYLRNHPLYKDRIVFWGPMGCLTGNYFLMRGNYVSKDILPLMQETFRFIRDFEGEVPGTEPRDCGNCLLHNLPMAKYEAEKYLREVLDVATEENLNYPD</sequence>
<comment type="function">
    <text evidence="1">Involved in the synthesis of autoinducer 2 (AI-2) which is secreted by bacteria and is used to communicate both the cell density and the metabolic potential of the environment. The regulation of gene expression in response to changes in cell density is called quorum sensing. Catalyzes the transformation of S-ribosylhomocysteine (RHC) to homocysteine (HC) and 4,5-dihydroxy-2,3-pentadione (DPD).</text>
</comment>
<comment type="catalytic activity">
    <reaction evidence="1">
        <text>S-(5-deoxy-D-ribos-5-yl)-L-homocysteine = (S)-4,5-dihydroxypentane-2,3-dione + L-homocysteine</text>
        <dbReference type="Rhea" id="RHEA:17753"/>
        <dbReference type="ChEBI" id="CHEBI:29484"/>
        <dbReference type="ChEBI" id="CHEBI:58195"/>
        <dbReference type="ChEBI" id="CHEBI:58199"/>
        <dbReference type="EC" id="4.4.1.21"/>
    </reaction>
</comment>
<comment type="cofactor">
    <cofactor evidence="1">
        <name>Fe cation</name>
        <dbReference type="ChEBI" id="CHEBI:24875"/>
    </cofactor>
    <text evidence="1">Binds 1 Fe cation per subunit.</text>
</comment>
<comment type="subunit">
    <text evidence="1">Homodimer.</text>
</comment>
<comment type="similarity">
    <text evidence="1">Belongs to the LuxS family.</text>
</comment>
<evidence type="ECO:0000255" key="1">
    <source>
        <dbReference type="HAMAP-Rule" id="MF_00091"/>
    </source>
</evidence>
<reference key="1">
    <citation type="journal article" date="2008" name="DNA Res.">
        <title>Determination of the genome sequence of Porphyromonas gingivalis strain ATCC 33277 and genomic comparison with strain W83 revealed extensive genome rearrangements in P. gingivalis.</title>
        <authorList>
            <person name="Naito M."/>
            <person name="Hirakawa H."/>
            <person name="Yamashita A."/>
            <person name="Ohara N."/>
            <person name="Shoji M."/>
            <person name="Yukitake H."/>
            <person name="Nakayama K."/>
            <person name="Toh H."/>
            <person name="Yoshimura F."/>
            <person name="Kuhara S."/>
            <person name="Hattori M."/>
            <person name="Hayashi T."/>
            <person name="Nakayama K."/>
        </authorList>
    </citation>
    <scope>NUCLEOTIDE SEQUENCE [LARGE SCALE GENOMIC DNA]</scope>
    <source>
        <strain>ATCC 33277 / DSM 20709 / CIP 103683 / JCM 12257 / NCTC 11834 / 2561</strain>
    </source>
</reference>